<comment type="function">
    <text evidence="1">Catalyzes the dehydration of the S-form of NAD(P)HX at the expense of ADP, which is converted to AMP. Together with NAD(P)HX epimerase, which catalyzes the epimerization of the S- and R-forms, the enzyme allows the repair of both epimers of NAD(P)HX, a damaged form of NAD(P)H that is a result of enzymatic or heat-dependent hydration.</text>
</comment>
<comment type="catalytic activity">
    <reaction evidence="1">
        <text>(6S)-NADHX + ADP = AMP + phosphate + NADH + H(+)</text>
        <dbReference type="Rhea" id="RHEA:32223"/>
        <dbReference type="ChEBI" id="CHEBI:15378"/>
        <dbReference type="ChEBI" id="CHEBI:43474"/>
        <dbReference type="ChEBI" id="CHEBI:57945"/>
        <dbReference type="ChEBI" id="CHEBI:64074"/>
        <dbReference type="ChEBI" id="CHEBI:456215"/>
        <dbReference type="ChEBI" id="CHEBI:456216"/>
        <dbReference type="EC" id="4.2.1.136"/>
    </reaction>
</comment>
<comment type="catalytic activity">
    <reaction evidence="1">
        <text>(6S)-NADPHX + ADP = AMP + phosphate + NADPH + H(+)</text>
        <dbReference type="Rhea" id="RHEA:32235"/>
        <dbReference type="ChEBI" id="CHEBI:15378"/>
        <dbReference type="ChEBI" id="CHEBI:43474"/>
        <dbReference type="ChEBI" id="CHEBI:57783"/>
        <dbReference type="ChEBI" id="CHEBI:64076"/>
        <dbReference type="ChEBI" id="CHEBI:456215"/>
        <dbReference type="ChEBI" id="CHEBI:456216"/>
        <dbReference type="EC" id="4.2.1.136"/>
    </reaction>
</comment>
<comment type="cofactor">
    <cofactor evidence="1">
        <name>Mg(2+)</name>
        <dbReference type="ChEBI" id="CHEBI:18420"/>
    </cofactor>
</comment>
<comment type="subunit">
    <text evidence="1">Homotetramer.</text>
</comment>
<comment type="similarity">
    <text evidence="1">Belongs to the NnrD/CARKD family.</text>
</comment>
<protein>
    <recommendedName>
        <fullName evidence="1">ADP-dependent (S)-NAD(P)H-hydrate dehydratase</fullName>
        <ecNumber evidence="1">4.2.1.136</ecNumber>
    </recommendedName>
    <alternativeName>
        <fullName evidence="1">ADP-dependent NAD(P)HX dehydratase</fullName>
    </alternativeName>
</protein>
<proteinExistence type="inferred from homology"/>
<organism>
    <name type="scientific">Neisseria meningitidis serogroup B (strain ATCC BAA-335 / MC58)</name>
    <dbReference type="NCBI Taxonomy" id="122586"/>
    <lineage>
        <taxon>Bacteria</taxon>
        <taxon>Pseudomonadati</taxon>
        <taxon>Pseudomonadota</taxon>
        <taxon>Betaproteobacteria</taxon>
        <taxon>Neisseriales</taxon>
        <taxon>Neisseriaceae</taxon>
        <taxon>Neisseria</taxon>
    </lineage>
</organism>
<gene>
    <name evidence="1" type="primary">nnrD1</name>
    <name type="ordered locus">NMB1159</name>
</gene>
<gene>
    <name evidence="1" type="primary">nnrD2</name>
    <name type="ordered locus">NMB1197</name>
</gene>
<keyword id="KW-0067">ATP-binding</keyword>
<keyword id="KW-0456">Lyase</keyword>
<keyword id="KW-0520">NAD</keyword>
<keyword id="KW-0521">NADP</keyword>
<keyword id="KW-0547">Nucleotide-binding</keyword>
<keyword id="KW-1185">Reference proteome</keyword>
<dbReference type="EC" id="4.2.1.136" evidence="1"/>
<dbReference type="EMBL" id="AE002098">
    <property type="protein sequence ID" value="AAF41545.1"/>
    <property type="molecule type" value="Genomic_DNA"/>
</dbReference>
<dbReference type="EMBL" id="AE002098">
    <property type="protein sequence ID" value="AAF41580.1"/>
    <property type="molecule type" value="Genomic_DNA"/>
</dbReference>
<dbReference type="PIR" id="G81111">
    <property type="entry name" value="G81111"/>
</dbReference>
<dbReference type="RefSeq" id="NP_274187.1">
    <property type="nucleotide sequence ID" value="NC_003112.2"/>
</dbReference>
<dbReference type="RefSeq" id="NP_274223.1">
    <property type="nucleotide sequence ID" value="NC_003112.2"/>
</dbReference>
<dbReference type="RefSeq" id="WP_002225209.1">
    <property type="nucleotide sequence ID" value="NC_003112.2"/>
</dbReference>
<dbReference type="SMR" id="Q9JRZ9"/>
<dbReference type="FunCoup" id="Q9JRZ9">
    <property type="interactions" value="248"/>
</dbReference>
<dbReference type="STRING" id="122586.NMB1159"/>
<dbReference type="PaxDb" id="122586-NMB1159"/>
<dbReference type="KEGG" id="nme:NMB1159"/>
<dbReference type="KEGG" id="nme:NMB1197"/>
<dbReference type="PATRIC" id="fig|122586.8.peg.1464"/>
<dbReference type="HOGENOM" id="CLU_024853_2_5_4"/>
<dbReference type="InParanoid" id="Q9JRZ9"/>
<dbReference type="OrthoDB" id="9806925at2"/>
<dbReference type="Proteomes" id="UP000000425">
    <property type="component" value="Chromosome"/>
</dbReference>
<dbReference type="GO" id="GO:0052855">
    <property type="term" value="F:ADP-dependent NAD(P)H-hydrate dehydratase activity"/>
    <property type="evidence" value="ECO:0000318"/>
    <property type="project" value="GO_Central"/>
</dbReference>
<dbReference type="GO" id="GO:0005524">
    <property type="term" value="F:ATP binding"/>
    <property type="evidence" value="ECO:0007669"/>
    <property type="project" value="UniProtKB-KW"/>
</dbReference>
<dbReference type="GO" id="GO:0052856">
    <property type="term" value="F:NAD(P)HX epimerase activity"/>
    <property type="evidence" value="ECO:0000318"/>
    <property type="project" value="GO_Central"/>
</dbReference>
<dbReference type="GO" id="GO:0110051">
    <property type="term" value="P:metabolite repair"/>
    <property type="evidence" value="ECO:0000318"/>
    <property type="project" value="GO_Central"/>
</dbReference>
<dbReference type="GO" id="GO:0046496">
    <property type="term" value="P:nicotinamide nucleotide metabolic process"/>
    <property type="evidence" value="ECO:0007669"/>
    <property type="project" value="UniProtKB-UniRule"/>
</dbReference>
<dbReference type="CDD" id="cd01171">
    <property type="entry name" value="YXKO-related"/>
    <property type="match status" value="1"/>
</dbReference>
<dbReference type="FunFam" id="3.40.1190.20:FF:000082">
    <property type="entry name" value="ADP-dependent (S)-NAD(P)H-hydrate dehydratase"/>
    <property type="match status" value="1"/>
</dbReference>
<dbReference type="Gene3D" id="3.40.1190.20">
    <property type="match status" value="1"/>
</dbReference>
<dbReference type="HAMAP" id="MF_01965">
    <property type="entry name" value="NADHX_dehydratase"/>
    <property type="match status" value="1"/>
</dbReference>
<dbReference type="InterPro" id="IPR000631">
    <property type="entry name" value="CARKD"/>
</dbReference>
<dbReference type="InterPro" id="IPR029056">
    <property type="entry name" value="Ribokinase-like"/>
</dbReference>
<dbReference type="NCBIfam" id="TIGR00196">
    <property type="entry name" value="yjeF_cterm"/>
    <property type="match status" value="1"/>
</dbReference>
<dbReference type="PANTHER" id="PTHR12592:SF0">
    <property type="entry name" value="ATP-DEPENDENT (S)-NAD(P)H-HYDRATE DEHYDRATASE"/>
    <property type="match status" value="1"/>
</dbReference>
<dbReference type="PANTHER" id="PTHR12592">
    <property type="entry name" value="ATP-DEPENDENT (S)-NAD(P)H-HYDRATE DEHYDRATASE FAMILY MEMBER"/>
    <property type="match status" value="1"/>
</dbReference>
<dbReference type="Pfam" id="PF01256">
    <property type="entry name" value="Carb_kinase"/>
    <property type="match status" value="1"/>
</dbReference>
<dbReference type="SUPFAM" id="SSF53613">
    <property type="entry name" value="Ribokinase-like"/>
    <property type="match status" value="1"/>
</dbReference>
<dbReference type="PROSITE" id="PS51383">
    <property type="entry name" value="YJEF_C_3"/>
    <property type="match status" value="1"/>
</dbReference>
<sequence length="296" mass="30347">MFPVFHLSGESRRQMLQTALRFPHVFKARAEDSHKGTFGTLAVVGGSAGMSGAPVLAASAAMYLGCGKVWAGFNQDTLPFAVIAGFPEIMLDTADSLAKRQDINAWVVGCGLGTGRAAVGTLAGILTEHTDKPVVLDADALNILSTDAETRNLARGCKNLILTPHPAEAARLLGTTVAQVQADRTAAVRKIGAIFGATVVLKGHKTLVASPDTEIYVNESGNAGLATAGSGDVLGGIIGSLLAQGVPVFEAACAGAWLHGAAADVIKESAGIAAGLLAGEIAPAARWLRNRITKSM</sequence>
<feature type="chain" id="PRO_0000416147" description="ADP-dependent (S)-NAD(P)H-hydrate dehydratase">
    <location>
        <begin position="1"/>
        <end position="296"/>
    </location>
</feature>
<feature type="domain" description="YjeF C-terminal" evidence="1">
    <location>
        <begin position="18"/>
        <end position="292"/>
    </location>
</feature>
<feature type="binding site" evidence="1">
    <location>
        <position position="53"/>
    </location>
    <ligand>
        <name>(6S)-NADPHX</name>
        <dbReference type="ChEBI" id="CHEBI:64076"/>
    </ligand>
</feature>
<feature type="binding site" evidence="1">
    <location>
        <position position="113"/>
    </location>
    <ligand>
        <name>(6S)-NADPHX</name>
        <dbReference type="ChEBI" id="CHEBI:64076"/>
    </ligand>
</feature>
<feature type="binding site" evidence="1">
    <location>
        <position position="165"/>
    </location>
    <ligand>
        <name>(6S)-NADPHX</name>
        <dbReference type="ChEBI" id="CHEBI:64076"/>
    </ligand>
</feature>
<feature type="binding site" evidence="1">
    <location>
        <begin position="202"/>
        <end position="206"/>
    </location>
    <ligand>
        <name>AMP</name>
        <dbReference type="ChEBI" id="CHEBI:456215"/>
    </ligand>
</feature>
<feature type="binding site" evidence="1">
    <location>
        <position position="231"/>
    </location>
    <ligand>
        <name>AMP</name>
        <dbReference type="ChEBI" id="CHEBI:456215"/>
    </ligand>
</feature>
<feature type="binding site" evidence="1">
    <location>
        <position position="232"/>
    </location>
    <ligand>
        <name>(6S)-NADPHX</name>
        <dbReference type="ChEBI" id="CHEBI:64076"/>
    </ligand>
</feature>
<accession>Q9JRZ9</accession>
<name>NNRD_NEIMB</name>
<evidence type="ECO:0000255" key="1">
    <source>
        <dbReference type="HAMAP-Rule" id="MF_01965"/>
    </source>
</evidence>
<reference key="1">
    <citation type="journal article" date="2000" name="Science">
        <title>Complete genome sequence of Neisseria meningitidis serogroup B strain MC58.</title>
        <authorList>
            <person name="Tettelin H."/>
            <person name="Saunders N.J."/>
            <person name="Heidelberg J.F."/>
            <person name="Jeffries A.C."/>
            <person name="Nelson K.E."/>
            <person name="Eisen J.A."/>
            <person name="Ketchum K.A."/>
            <person name="Hood D.W."/>
            <person name="Peden J.F."/>
            <person name="Dodson R.J."/>
            <person name="Nelson W.C."/>
            <person name="Gwinn M.L."/>
            <person name="DeBoy R.T."/>
            <person name="Peterson J.D."/>
            <person name="Hickey E.K."/>
            <person name="Haft D.H."/>
            <person name="Salzberg S.L."/>
            <person name="White O."/>
            <person name="Fleischmann R.D."/>
            <person name="Dougherty B.A."/>
            <person name="Mason T.M."/>
            <person name="Ciecko A."/>
            <person name="Parksey D.S."/>
            <person name="Blair E."/>
            <person name="Cittone H."/>
            <person name="Clark E.B."/>
            <person name="Cotton M.D."/>
            <person name="Utterback T.R."/>
            <person name="Khouri H.M."/>
            <person name="Qin H."/>
            <person name="Vamathevan J.J."/>
            <person name="Gill J."/>
            <person name="Scarlato V."/>
            <person name="Masignani V."/>
            <person name="Pizza M."/>
            <person name="Grandi G."/>
            <person name="Sun L."/>
            <person name="Smith H.O."/>
            <person name="Fraser C.M."/>
            <person name="Moxon E.R."/>
            <person name="Rappuoli R."/>
            <person name="Venter J.C."/>
        </authorList>
    </citation>
    <scope>NUCLEOTIDE SEQUENCE [LARGE SCALE GENOMIC DNA]</scope>
    <source>
        <strain>ATCC BAA-335 / MC58</strain>
    </source>
</reference>